<name>HIS9_CLOAB</name>
<evidence type="ECO:0000305" key="1"/>
<accession>P58291</accession>
<feature type="chain" id="PRO_0000122317" description="Probable histidinol-phosphatase">
    <location>
        <begin position="1"/>
        <end position="255"/>
    </location>
</feature>
<gene>
    <name type="primary">hisK</name>
    <name type="ordered locus">CA_C2727</name>
</gene>
<sequence length="255" mass="30085">MVFDTHLHTLFSTDSKMNIEEAIDAGEKKNLGIIITEHIDLNYPVKGEFVFDIDKYFKEYNKYRSNKVLLGVEIGMGEEIKEQNKSINDKYEFDYVLGSIHLLNGLDLYEKTIYKSSPKKEVFEMYFKTMLACLRCHEYIDSLAHIDYISRYAAYHDGEIYYNEYSDYIDEVLKFIVDREIVIEINTRRLNKKEVCENLMPIYKRYSELGGRFVTIGSDSHYKDSIGLNFKNALKMAENCNLKPVFFEKRLMKYA</sequence>
<organism>
    <name type="scientific">Clostridium acetobutylicum (strain ATCC 824 / DSM 792 / JCM 1419 / IAM 19013 / LMG 5710 / NBRC 13948 / NRRL B-527 / VKM B-1787 / 2291 / W)</name>
    <dbReference type="NCBI Taxonomy" id="272562"/>
    <lineage>
        <taxon>Bacteria</taxon>
        <taxon>Bacillati</taxon>
        <taxon>Bacillota</taxon>
        <taxon>Clostridia</taxon>
        <taxon>Eubacteriales</taxon>
        <taxon>Clostridiaceae</taxon>
        <taxon>Clostridium</taxon>
    </lineage>
</organism>
<dbReference type="EC" id="3.1.3.15"/>
<dbReference type="EMBL" id="AE001437">
    <property type="protein sequence ID" value="AAK80673.1"/>
    <property type="molecule type" value="Genomic_DNA"/>
</dbReference>
<dbReference type="PIR" id="F97235">
    <property type="entry name" value="F97235"/>
</dbReference>
<dbReference type="RefSeq" id="NP_349333.1">
    <property type="nucleotide sequence ID" value="NC_003030.1"/>
</dbReference>
<dbReference type="RefSeq" id="WP_010966014.1">
    <property type="nucleotide sequence ID" value="NC_003030.1"/>
</dbReference>
<dbReference type="SMR" id="P58291"/>
<dbReference type="STRING" id="272562.CA_C2727"/>
<dbReference type="DNASU" id="1118910"/>
<dbReference type="KEGG" id="cac:CA_C2727"/>
<dbReference type="PATRIC" id="fig|272562.8.peg.2916"/>
<dbReference type="eggNOG" id="COG1387">
    <property type="taxonomic scope" value="Bacteria"/>
</dbReference>
<dbReference type="HOGENOM" id="CLU_054611_3_0_9"/>
<dbReference type="OrthoDB" id="9775255at2"/>
<dbReference type="UniPathway" id="UPA00031">
    <property type="reaction ID" value="UER00013"/>
</dbReference>
<dbReference type="Proteomes" id="UP000000814">
    <property type="component" value="Chromosome"/>
</dbReference>
<dbReference type="GO" id="GO:0005737">
    <property type="term" value="C:cytoplasm"/>
    <property type="evidence" value="ECO:0007669"/>
    <property type="project" value="TreeGrafter"/>
</dbReference>
<dbReference type="GO" id="GO:0004401">
    <property type="term" value="F:histidinol-phosphatase activity"/>
    <property type="evidence" value="ECO:0007669"/>
    <property type="project" value="UniProtKB-EC"/>
</dbReference>
<dbReference type="GO" id="GO:0000105">
    <property type="term" value="P:L-histidine biosynthetic process"/>
    <property type="evidence" value="ECO:0007669"/>
    <property type="project" value="UniProtKB-UniPathway"/>
</dbReference>
<dbReference type="Gene3D" id="3.20.20.140">
    <property type="entry name" value="Metal-dependent hydrolases"/>
    <property type="match status" value="1"/>
</dbReference>
<dbReference type="InterPro" id="IPR010140">
    <property type="entry name" value="Histidinol_P_phosphatase_HisJ"/>
</dbReference>
<dbReference type="InterPro" id="IPR004013">
    <property type="entry name" value="PHP_dom"/>
</dbReference>
<dbReference type="InterPro" id="IPR016195">
    <property type="entry name" value="Pol/histidinol_Pase-like"/>
</dbReference>
<dbReference type="NCBIfam" id="TIGR01856">
    <property type="entry name" value="hisJ_fam"/>
    <property type="match status" value="1"/>
</dbReference>
<dbReference type="NCBIfam" id="NF004086">
    <property type="entry name" value="PRK05588.1"/>
    <property type="match status" value="1"/>
</dbReference>
<dbReference type="PANTHER" id="PTHR21039">
    <property type="entry name" value="HISTIDINOL PHOSPHATASE-RELATED"/>
    <property type="match status" value="1"/>
</dbReference>
<dbReference type="PANTHER" id="PTHR21039:SF0">
    <property type="entry name" value="HISTIDINOL-PHOSPHATASE"/>
    <property type="match status" value="1"/>
</dbReference>
<dbReference type="Pfam" id="PF02811">
    <property type="entry name" value="PHP"/>
    <property type="match status" value="1"/>
</dbReference>
<dbReference type="SUPFAM" id="SSF89550">
    <property type="entry name" value="PHP domain-like"/>
    <property type="match status" value="1"/>
</dbReference>
<protein>
    <recommendedName>
        <fullName>Probable histidinol-phosphatase</fullName>
        <shortName>HolPase</shortName>
        <ecNumber>3.1.3.15</ecNumber>
    </recommendedName>
</protein>
<reference key="1">
    <citation type="journal article" date="2001" name="J. Bacteriol.">
        <title>Genome sequence and comparative analysis of the solvent-producing bacterium Clostridium acetobutylicum.</title>
        <authorList>
            <person name="Noelling J."/>
            <person name="Breton G."/>
            <person name="Omelchenko M.V."/>
            <person name="Makarova K.S."/>
            <person name="Zeng Q."/>
            <person name="Gibson R."/>
            <person name="Lee H.M."/>
            <person name="Dubois J."/>
            <person name="Qiu D."/>
            <person name="Hitti J."/>
            <person name="Wolf Y.I."/>
            <person name="Tatusov R.L."/>
            <person name="Sabathe F."/>
            <person name="Doucette-Stamm L.A."/>
            <person name="Soucaille P."/>
            <person name="Daly M.J."/>
            <person name="Bennett G.N."/>
            <person name="Koonin E.V."/>
            <person name="Smith D.R."/>
        </authorList>
    </citation>
    <scope>NUCLEOTIDE SEQUENCE [LARGE SCALE GENOMIC DNA]</scope>
    <source>
        <strain>ATCC 824 / DSM 792 / JCM 1419 / IAM 19013 / LMG 5710 / NBRC 13948 / NRRL B-527 / VKM B-1787 / 2291 / W</strain>
    </source>
</reference>
<keyword id="KW-0028">Amino-acid biosynthesis</keyword>
<keyword id="KW-0368">Histidine biosynthesis</keyword>
<keyword id="KW-0378">Hydrolase</keyword>
<keyword id="KW-1185">Reference proteome</keyword>
<proteinExistence type="inferred from homology"/>
<comment type="catalytic activity">
    <reaction>
        <text>L-histidinol phosphate + H2O = L-histidinol + phosphate</text>
        <dbReference type="Rhea" id="RHEA:14465"/>
        <dbReference type="ChEBI" id="CHEBI:15377"/>
        <dbReference type="ChEBI" id="CHEBI:43474"/>
        <dbReference type="ChEBI" id="CHEBI:57699"/>
        <dbReference type="ChEBI" id="CHEBI:57980"/>
        <dbReference type="EC" id="3.1.3.15"/>
    </reaction>
</comment>
<comment type="pathway">
    <text>Amino-acid biosynthesis; L-histidine biosynthesis; L-histidine from 5-phospho-alpha-D-ribose 1-diphosphate: step 8/9.</text>
</comment>
<comment type="similarity">
    <text evidence="1">Belongs to the PHP hydrolase family. HisK subfamily.</text>
</comment>